<reference key="1">
    <citation type="journal article" date="2005" name="PLoS Biol.">
        <title>The Wolbachia genome of Brugia malayi: endosymbiont evolution within a human pathogenic nematode.</title>
        <authorList>
            <person name="Foster J."/>
            <person name="Ganatra M."/>
            <person name="Kamal I."/>
            <person name="Ware J."/>
            <person name="Makarova K."/>
            <person name="Ivanova N."/>
            <person name="Bhattacharyya A."/>
            <person name="Kapatral V."/>
            <person name="Kumar S."/>
            <person name="Posfai J."/>
            <person name="Vincze T."/>
            <person name="Ingram J."/>
            <person name="Moran L."/>
            <person name="Lapidus A."/>
            <person name="Omelchenko M."/>
            <person name="Kyrpides N."/>
            <person name="Ghedin E."/>
            <person name="Wang S."/>
            <person name="Goltsman E."/>
            <person name="Joukov V."/>
            <person name="Ostrovskaya O."/>
            <person name="Tsukerman K."/>
            <person name="Mazur M."/>
            <person name="Comb D."/>
            <person name="Koonin E."/>
            <person name="Slatko B."/>
        </authorList>
    </citation>
    <scope>NUCLEOTIDE SEQUENCE [LARGE SCALE GENOMIC DNA]</scope>
    <source>
        <strain>TRS</strain>
    </source>
</reference>
<accession>Q5GSG4</accession>
<organism>
    <name type="scientific">Wolbachia sp. subsp. Brugia malayi (strain TRS)</name>
    <dbReference type="NCBI Taxonomy" id="292805"/>
    <lineage>
        <taxon>Bacteria</taxon>
        <taxon>Pseudomonadati</taxon>
        <taxon>Pseudomonadota</taxon>
        <taxon>Alphaproteobacteria</taxon>
        <taxon>Rickettsiales</taxon>
        <taxon>Anaplasmataceae</taxon>
        <taxon>Wolbachieae</taxon>
        <taxon>Wolbachia</taxon>
    </lineage>
</organism>
<comment type="function">
    <text evidence="1">Catalyzes the attachment of threonine to tRNA(Thr) in a two-step reaction: L-threonine is first activated by ATP to form Thr-AMP and then transferred to the acceptor end of tRNA(Thr). Also edits incorrectly charged L-seryl-tRNA(Thr).</text>
</comment>
<comment type="catalytic activity">
    <reaction evidence="1">
        <text>tRNA(Thr) + L-threonine + ATP = L-threonyl-tRNA(Thr) + AMP + diphosphate + H(+)</text>
        <dbReference type="Rhea" id="RHEA:24624"/>
        <dbReference type="Rhea" id="RHEA-COMP:9670"/>
        <dbReference type="Rhea" id="RHEA-COMP:9704"/>
        <dbReference type="ChEBI" id="CHEBI:15378"/>
        <dbReference type="ChEBI" id="CHEBI:30616"/>
        <dbReference type="ChEBI" id="CHEBI:33019"/>
        <dbReference type="ChEBI" id="CHEBI:57926"/>
        <dbReference type="ChEBI" id="CHEBI:78442"/>
        <dbReference type="ChEBI" id="CHEBI:78534"/>
        <dbReference type="ChEBI" id="CHEBI:456215"/>
        <dbReference type="EC" id="6.1.1.3"/>
    </reaction>
</comment>
<comment type="cofactor">
    <cofactor evidence="1">
        <name>Zn(2+)</name>
        <dbReference type="ChEBI" id="CHEBI:29105"/>
    </cofactor>
    <text evidence="1">Binds 1 zinc ion per subunit.</text>
</comment>
<comment type="subunit">
    <text evidence="1">Homodimer.</text>
</comment>
<comment type="subcellular location">
    <subcellularLocation>
        <location evidence="1">Cytoplasm</location>
    </subcellularLocation>
</comment>
<comment type="similarity">
    <text evidence="1">Belongs to the class-II aminoacyl-tRNA synthetase family.</text>
</comment>
<gene>
    <name evidence="1" type="primary">thrS</name>
    <name type="ordered locus">Wbm0472</name>
</gene>
<proteinExistence type="inferred from homology"/>
<name>SYT_WOLTR</name>
<feature type="chain" id="PRO_0000101088" description="Threonine--tRNA ligase">
    <location>
        <begin position="1"/>
        <end position="632"/>
    </location>
</feature>
<feature type="domain" description="TGS" evidence="2">
    <location>
        <begin position="1"/>
        <end position="59"/>
    </location>
</feature>
<feature type="region of interest" description="Catalytic" evidence="1">
    <location>
        <begin position="240"/>
        <end position="532"/>
    </location>
</feature>
<feature type="binding site" evidence="1">
    <location>
        <position position="332"/>
    </location>
    <ligand>
        <name>Zn(2+)</name>
        <dbReference type="ChEBI" id="CHEBI:29105"/>
    </ligand>
</feature>
<feature type="binding site" evidence="1">
    <location>
        <position position="383"/>
    </location>
    <ligand>
        <name>Zn(2+)</name>
        <dbReference type="ChEBI" id="CHEBI:29105"/>
    </ligand>
</feature>
<feature type="binding site" evidence="1">
    <location>
        <position position="509"/>
    </location>
    <ligand>
        <name>Zn(2+)</name>
        <dbReference type="ChEBI" id="CHEBI:29105"/>
    </ligand>
</feature>
<keyword id="KW-0030">Aminoacyl-tRNA synthetase</keyword>
<keyword id="KW-0067">ATP-binding</keyword>
<keyword id="KW-0963">Cytoplasm</keyword>
<keyword id="KW-0436">Ligase</keyword>
<keyword id="KW-0479">Metal-binding</keyword>
<keyword id="KW-0547">Nucleotide-binding</keyword>
<keyword id="KW-0648">Protein biosynthesis</keyword>
<keyword id="KW-1185">Reference proteome</keyword>
<keyword id="KW-0694">RNA-binding</keyword>
<keyword id="KW-0820">tRNA-binding</keyword>
<keyword id="KW-0862">Zinc</keyword>
<sequence>MIRITFLAKQKVEEYSSRVTGFDILQPDISKEAIALRVNGELYDLSREIESDTEIDVIQLNDEEGLDIIRHDAAHIMAQAVKELFPNAQVTIGPTIQDGFYYDFAIDHTFTTDDLAAIEKKMKEIIKSNHRFIREVWARKQAINFFSSIGEKYKVDIISSIPESEDLTVYRQGDFVDLCRGPHSPSTSRVKAFKLMKVAGAYWRGNVKGPMLQRIYGTAWRNKDELNIYLKRLEEAKKRDHRRIAKDMDLFHIQEEAVGQVFWHEQGYTLYNVLESYIRKKLINNGYAEVKTPILVSKELWEKSGHWDKFRENMFIVDESESKKLAIKPMNCPCHVQIFNSYTRSYRNLPIRMAEFGMCHRNESSGSLHGLMRVRGFTQDDAHIFCMEEQVNSETVKFCALLKEVYSELGFNEISVKFSDRPNVRAGDNEVWDRAEKALLEAVKEAGLSYELNPGEGAFYGPKLEFILKDAIGRSWQCGTLQVDFILPERLGAFYIGADGQKYHPVMLHRAILGTFERFIGILIEHYAGKFPLWLAPTQLVILTVTNEADNYATEISNVLKEQGVRVKTDLTNEKVSYKIRLHSSNKVPILWIVGKNEVASKTVSVRNLGSEKQESSSCEKAVKLLLKKVLI</sequence>
<evidence type="ECO:0000255" key="1">
    <source>
        <dbReference type="HAMAP-Rule" id="MF_00184"/>
    </source>
</evidence>
<evidence type="ECO:0000255" key="2">
    <source>
        <dbReference type="PROSITE-ProRule" id="PRU01228"/>
    </source>
</evidence>
<dbReference type="EC" id="6.1.1.3" evidence="1"/>
<dbReference type="EMBL" id="AE017321">
    <property type="protein sequence ID" value="AAW71060.1"/>
    <property type="molecule type" value="Genomic_DNA"/>
</dbReference>
<dbReference type="RefSeq" id="WP_011256670.1">
    <property type="nucleotide sequence ID" value="NC_006833.1"/>
</dbReference>
<dbReference type="SMR" id="Q5GSG4"/>
<dbReference type="STRING" id="292805.Wbm0472"/>
<dbReference type="KEGG" id="wbm:Wbm0472"/>
<dbReference type="eggNOG" id="COG0441">
    <property type="taxonomic scope" value="Bacteria"/>
</dbReference>
<dbReference type="HOGENOM" id="CLU_008554_0_1_5"/>
<dbReference type="Proteomes" id="UP000000534">
    <property type="component" value="Chromosome"/>
</dbReference>
<dbReference type="GO" id="GO:0005737">
    <property type="term" value="C:cytoplasm"/>
    <property type="evidence" value="ECO:0007669"/>
    <property type="project" value="UniProtKB-SubCell"/>
</dbReference>
<dbReference type="GO" id="GO:0005524">
    <property type="term" value="F:ATP binding"/>
    <property type="evidence" value="ECO:0007669"/>
    <property type="project" value="UniProtKB-UniRule"/>
</dbReference>
<dbReference type="GO" id="GO:0046872">
    <property type="term" value="F:metal ion binding"/>
    <property type="evidence" value="ECO:0007669"/>
    <property type="project" value="UniProtKB-KW"/>
</dbReference>
<dbReference type="GO" id="GO:0004829">
    <property type="term" value="F:threonine-tRNA ligase activity"/>
    <property type="evidence" value="ECO:0007669"/>
    <property type="project" value="UniProtKB-UniRule"/>
</dbReference>
<dbReference type="GO" id="GO:0000049">
    <property type="term" value="F:tRNA binding"/>
    <property type="evidence" value="ECO:0007669"/>
    <property type="project" value="UniProtKB-KW"/>
</dbReference>
<dbReference type="GO" id="GO:0006435">
    <property type="term" value="P:threonyl-tRNA aminoacylation"/>
    <property type="evidence" value="ECO:0007669"/>
    <property type="project" value="UniProtKB-UniRule"/>
</dbReference>
<dbReference type="CDD" id="cd01667">
    <property type="entry name" value="TGS_ThrRS"/>
    <property type="match status" value="1"/>
</dbReference>
<dbReference type="CDD" id="cd00860">
    <property type="entry name" value="ThrRS_anticodon"/>
    <property type="match status" value="1"/>
</dbReference>
<dbReference type="CDD" id="cd00771">
    <property type="entry name" value="ThrRS_core"/>
    <property type="match status" value="1"/>
</dbReference>
<dbReference type="FunFam" id="3.30.54.20:FF:000002">
    <property type="entry name" value="Threonine--tRNA ligase"/>
    <property type="match status" value="1"/>
</dbReference>
<dbReference type="FunFam" id="3.30.930.10:FF:000002">
    <property type="entry name" value="Threonine--tRNA ligase"/>
    <property type="match status" value="1"/>
</dbReference>
<dbReference type="FunFam" id="3.40.50.800:FF:000001">
    <property type="entry name" value="Threonine--tRNA ligase"/>
    <property type="match status" value="1"/>
</dbReference>
<dbReference type="FunFam" id="3.30.980.10:FF:000005">
    <property type="entry name" value="Threonyl-tRNA synthetase, mitochondrial"/>
    <property type="match status" value="1"/>
</dbReference>
<dbReference type="Gene3D" id="3.10.20.30">
    <property type="match status" value="1"/>
</dbReference>
<dbReference type="Gene3D" id="3.30.54.20">
    <property type="match status" value="1"/>
</dbReference>
<dbReference type="Gene3D" id="3.40.50.800">
    <property type="entry name" value="Anticodon-binding domain"/>
    <property type="match status" value="1"/>
</dbReference>
<dbReference type="Gene3D" id="3.30.930.10">
    <property type="entry name" value="Bira Bifunctional Protein, Domain 2"/>
    <property type="match status" value="1"/>
</dbReference>
<dbReference type="Gene3D" id="3.30.980.10">
    <property type="entry name" value="Threonyl-trna Synthetase, Chain A, domain 2"/>
    <property type="match status" value="1"/>
</dbReference>
<dbReference type="HAMAP" id="MF_00184">
    <property type="entry name" value="Thr_tRNA_synth"/>
    <property type="match status" value="1"/>
</dbReference>
<dbReference type="InterPro" id="IPR002314">
    <property type="entry name" value="aa-tRNA-synt_IIb"/>
</dbReference>
<dbReference type="InterPro" id="IPR006195">
    <property type="entry name" value="aa-tRNA-synth_II"/>
</dbReference>
<dbReference type="InterPro" id="IPR045864">
    <property type="entry name" value="aa-tRNA-synth_II/BPL/LPL"/>
</dbReference>
<dbReference type="InterPro" id="IPR004154">
    <property type="entry name" value="Anticodon-bd"/>
</dbReference>
<dbReference type="InterPro" id="IPR036621">
    <property type="entry name" value="Anticodon-bd_dom_sf"/>
</dbReference>
<dbReference type="InterPro" id="IPR012675">
    <property type="entry name" value="Beta-grasp_dom_sf"/>
</dbReference>
<dbReference type="InterPro" id="IPR004095">
    <property type="entry name" value="TGS"/>
</dbReference>
<dbReference type="InterPro" id="IPR012676">
    <property type="entry name" value="TGS-like"/>
</dbReference>
<dbReference type="InterPro" id="IPR002320">
    <property type="entry name" value="Thr-tRNA-ligase_IIa"/>
</dbReference>
<dbReference type="InterPro" id="IPR018163">
    <property type="entry name" value="Thr/Ala-tRNA-synth_IIc_edit"/>
</dbReference>
<dbReference type="InterPro" id="IPR047246">
    <property type="entry name" value="ThrRS_anticodon"/>
</dbReference>
<dbReference type="InterPro" id="IPR033728">
    <property type="entry name" value="ThrRS_core"/>
</dbReference>
<dbReference type="InterPro" id="IPR012947">
    <property type="entry name" value="tRNA_SAD"/>
</dbReference>
<dbReference type="NCBIfam" id="TIGR00418">
    <property type="entry name" value="thrS"/>
    <property type="match status" value="1"/>
</dbReference>
<dbReference type="PANTHER" id="PTHR11451:SF44">
    <property type="entry name" value="THREONINE--TRNA LIGASE, CHLOROPLASTIC_MITOCHONDRIAL 2"/>
    <property type="match status" value="1"/>
</dbReference>
<dbReference type="PANTHER" id="PTHR11451">
    <property type="entry name" value="THREONINE-TRNA LIGASE"/>
    <property type="match status" value="1"/>
</dbReference>
<dbReference type="Pfam" id="PF03129">
    <property type="entry name" value="HGTP_anticodon"/>
    <property type="match status" value="1"/>
</dbReference>
<dbReference type="Pfam" id="PF00587">
    <property type="entry name" value="tRNA-synt_2b"/>
    <property type="match status" value="1"/>
</dbReference>
<dbReference type="Pfam" id="PF07973">
    <property type="entry name" value="tRNA_SAD"/>
    <property type="match status" value="1"/>
</dbReference>
<dbReference type="PRINTS" id="PR01047">
    <property type="entry name" value="TRNASYNTHTHR"/>
</dbReference>
<dbReference type="SMART" id="SM00863">
    <property type="entry name" value="tRNA_SAD"/>
    <property type="match status" value="1"/>
</dbReference>
<dbReference type="SUPFAM" id="SSF52954">
    <property type="entry name" value="Class II aaRS ABD-related"/>
    <property type="match status" value="1"/>
</dbReference>
<dbReference type="SUPFAM" id="SSF55681">
    <property type="entry name" value="Class II aaRS and biotin synthetases"/>
    <property type="match status" value="1"/>
</dbReference>
<dbReference type="SUPFAM" id="SSF81271">
    <property type="entry name" value="TGS-like"/>
    <property type="match status" value="1"/>
</dbReference>
<dbReference type="SUPFAM" id="SSF55186">
    <property type="entry name" value="ThrRS/AlaRS common domain"/>
    <property type="match status" value="1"/>
</dbReference>
<dbReference type="PROSITE" id="PS50862">
    <property type="entry name" value="AA_TRNA_LIGASE_II"/>
    <property type="match status" value="1"/>
</dbReference>
<dbReference type="PROSITE" id="PS51880">
    <property type="entry name" value="TGS"/>
    <property type="match status" value="1"/>
</dbReference>
<protein>
    <recommendedName>
        <fullName evidence="1">Threonine--tRNA ligase</fullName>
        <ecNumber evidence="1">6.1.1.3</ecNumber>
    </recommendedName>
    <alternativeName>
        <fullName evidence="1">Threonyl-tRNA synthetase</fullName>
        <shortName evidence="1">ThrRS</shortName>
    </alternativeName>
</protein>